<protein>
    <recommendedName>
        <fullName>Ankyrin repeat domain-containing protein 54</fullName>
    </recommendedName>
</protein>
<keyword id="KW-0040">ANK repeat</keyword>
<keyword id="KW-0963">Cytoplasm</keyword>
<keyword id="KW-0539">Nucleus</keyword>
<keyword id="KW-1185">Reference proteome</keyword>
<keyword id="KW-0677">Repeat</keyword>
<organism>
    <name type="scientific">Danio rerio</name>
    <name type="common">Zebrafish</name>
    <name type="synonym">Brachydanio rerio</name>
    <dbReference type="NCBI Taxonomy" id="7955"/>
    <lineage>
        <taxon>Eukaryota</taxon>
        <taxon>Metazoa</taxon>
        <taxon>Chordata</taxon>
        <taxon>Craniata</taxon>
        <taxon>Vertebrata</taxon>
        <taxon>Euteleostomi</taxon>
        <taxon>Actinopterygii</taxon>
        <taxon>Neopterygii</taxon>
        <taxon>Teleostei</taxon>
        <taxon>Ostariophysi</taxon>
        <taxon>Cypriniformes</taxon>
        <taxon>Danionidae</taxon>
        <taxon>Danioninae</taxon>
        <taxon>Danio</taxon>
    </lineage>
</organism>
<dbReference type="EMBL" id="BC076214">
    <property type="protein sequence ID" value="AAH76214.1"/>
    <property type="molecule type" value="mRNA"/>
</dbReference>
<dbReference type="EMBL" id="BC092933">
    <property type="protein sequence ID" value="AAH92933.1"/>
    <property type="molecule type" value="mRNA"/>
</dbReference>
<dbReference type="EMBL" id="BC096993">
    <property type="protein sequence ID" value="AAH96993.1"/>
    <property type="molecule type" value="mRNA"/>
</dbReference>
<dbReference type="RefSeq" id="NP_001002578.1">
    <property type="nucleotide sequence ID" value="NM_001002578.1"/>
</dbReference>
<dbReference type="SMR" id="Q6DGX3"/>
<dbReference type="FunCoup" id="Q6DGX3">
    <property type="interactions" value="1256"/>
</dbReference>
<dbReference type="STRING" id="7955.ENSDARP00000072599"/>
<dbReference type="PaxDb" id="7955-ENSDARP00000072599"/>
<dbReference type="Ensembl" id="ENSDART00000078137">
    <property type="protein sequence ID" value="ENSDARP00000072599"/>
    <property type="gene ID" value="ENSDARG00000055743"/>
</dbReference>
<dbReference type="GeneID" id="436851"/>
<dbReference type="KEGG" id="dre:436851"/>
<dbReference type="AGR" id="ZFIN:ZDB-GENE-040718-318"/>
<dbReference type="CTD" id="129138"/>
<dbReference type="ZFIN" id="ZDB-GENE-040718-318">
    <property type="gene designation" value="ankrd54"/>
</dbReference>
<dbReference type="eggNOG" id="KOG0504">
    <property type="taxonomic scope" value="Eukaryota"/>
</dbReference>
<dbReference type="HOGENOM" id="CLU_072816_0_0_1"/>
<dbReference type="InParanoid" id="Q6DGX3"/>
<dbReference type="OMA" id="IQMRPSG"/>
<dbReference type="OrthoDB" id="496981at2759"/>
<dbReference type="PhylomeDB" id="Q6DGX3"/>
<dbReference type="TreeFam" id="TF330790"/>
<dbReference type="PRO" id="PR:Q6DGX3"/>
<dbReference type="Proteomes" id="UP000000437">
    <property type="component" value="Chromosome 3"/>
</dbReference>
<dbReference type="Bgee" id="ENSDARG00000055743">
    <property type="expression patterns" value="Expressed in somite and 25 other cell types or tissues"/>
</dbReference>
<dbReference type="GO" id="GO:0005737">
    <property type="term" value="C:cytoplasm"/>
    <property type="evidence" value="ECO:0007669"/>
    <property type="project" value="UniProtKB-SubCell"/>
</dbReference>
<dbReference type="GO" id="GO:0030496">
    <property type="term" value="C:midbody"/>
    <property type="evidence" value="ECO:0007669"/>
    <property type="project" value="UniProtKB-SubCell"/>
</dbReference>
<dbReference type="GO" id="GO:0005634">
    <property type="term" value="C:nucleus"/>
    <property type="evidence" value="ECO:0007669"/>
    <property type="project" value="UniProtKB-SubCell"/>
</dbReference>
<dbReference type="GO" id="GO:1902531">
    <property type="term" value="P:regulation of intracellular signal transduction"/>
    <property type="evidence" value="ECO:0000318"/>
    <property type="project" value="GO_Central"/>
</dbReference>
<dbReference type="FunFam" id="1.25.40.20:FF:000108">
    <property type="entry name" value="Ankyrin repeat domain-containing protein 54"/>
    <property type="match status" value="1"/>
</dbReference>
<dbReference type="FunFam" id="1.25.40.20:FF:000162">
    <property type="entry name" value="Ankyrin repeat domain-containing protein 54"/>
    <property type="match status" value="1"/>
</dbReference>
<dbReference type="Gene3D" id="1.25.40.20">
    <property type="entry name" value="Ankyrin repeat-containing domain"/>
    <property type="match status" value="2"/>
</dbReference>
<dbReference type="InterPro" id="IPR002110">
    <property type="entry name" value="Ankyrin_rpt"/>
</dbReference>
<dbReference type="InterPro" id="IPR036770">
    <property type="entry name" value="Ankyrin_rpt-contain_sf"/>
</dbReference>
<dbReference type="PANTHER" id="PTHR24197:SF44">
    <property type="entry name" value="ANKYRIN REPEAT DOMAIN-CONTAINING PROTEIN 54"/>
    <property type="match status" value="1"/>
</dbReference>
<dbReference type="PANTHER" id="PTHR24197">
    <property type="entry name" value="ANKYRIN REPEAT DOMAIN-CONTAINING PROTEIN 61"/>
    <property type="match status" value="1"/>
</dbReference>
<dbReference type="Pfam" id="PF12796">
    <property type="entry name" value="Ank_2"/>
    <property type="match status" value="1"/>
</dbReference>
<dbReference type="SMART" id="SM00248">
    <property type="entry name" value="ANK"/>
    <property type="match status" value="3"/>
</dbReference>
<dbReference type="SUPFAM" id="SSF48403">
    <property type="entry name" value="Ankyrin repeat"/>
    <property type="match status" value="1"/>
</dbReference>
<dbReference type="PROSITE" id="PS50297">
    <property type="entry name" value="ANK_REP_REGION"/>
    <property type="match status" value="1"/>
</dbReference>
<dbReference type="PROSITE" id="PS50088">
    <property type="entry name" value="ANK_REPEAT"/>
    <property type="match status" value="2"/>
</dbReference>
<proteinExistence type="evidence at transcript level"/>
<feature type="chain" id="PRO_0000274496" description="Ankyrin repeat domain-containing protein 54">
    <location>
        <begin position="1"/>
        <end position="315"/>
    </location>
</feature>
<feature type="repeat" description="ANK 1">
    <location>
        <begin position="124"/>
        <end position="153"/>
    </location>
</feature>
<feature type="repeat" description="ANK 2">
    <location>
        <begin position="157"/>
        <end position="186"/>
    </location>
</feature>
<feature type="repeat" description="ANK 3">
    <location>
        <begin position="190"/>
        <end position="219"/>
    </location>
</feature>
<feature type="repeat" description="ANK 4">
    <location>
        <begin position="223"/>
        <end position="255"/>
    </location>
</feature>
<feature type="region of interest" description="Disordered" evidence="2">
    <location>
        <begin position="1"/>
        <end position="49"/>
    </location>
</feature>
<sequence length="315" mass="34335">MDGSSPLLAAAGSDGDRSSSEGEYTLAGGPSAGDTEKREGESPMEAAGAGTVGFSISRLDTLSALRLNRTRPAADTELRYLHLLWKPGELLQAGRSTPGKITSSRVRRLARARRNMGPIGKDLHAVKRLREAANSNDIDTVRRLLEDDTDPCAADDKGRTALHFSSCNGNETIVQLLLSYGADPNQRDSLGNTPLHLAACTNHVPVITTLLRGGARVDALDRAGRTPLHLARSKLNILQEGDSRSLETLRGEVTQIIQMLREYLNIMGQSEEREKLEHISTQLQNTRTREQVDEVTDLLASFTSLSIQMQNMGDR</sequence>
<evidence type="ECO:0000250" key="1"/>
<evidence type="ECO:0000256" key="2">
    <source>
        <dbReference type="SAM" id="MobiDB-lite"/>
    </source>
</evidence>
<name>ANR54_DANRE</name>
<reference key="1">
    <citation type="submission" date="2004-07" db="EMBL/GenBank/DDBJ databases">
        <authorList>
            <consortium name="NIH - Zebrafish Gene Collection (ZGC) project"/>
        </authorList>
    </citation>
    <scope>NUCLEOTIDE SEQUENCE [LARGE SCALE MRNA]</scope>
    <source>
        <strain>AB</strain>
        <tissue>Embryo</tissue>
        <tissue>Liver</tissue>
    </source>
</reference>
<comment type="function">
    <text evidence="1">Plays an important role in regulating intracellular signaling events associated with erythroid terminal differentiation.</text>
</comment>
<comment type="subcellular location">
    <subcellularLocation>
        <location evidence="1">Nucleus</location>
    </subcellularLocation>
    <subcellularLocation>
        <location evidence="1">Cytoplasm</location>
    </subcellularLocation>
    <subcellularLocation>
        <location evidence="1">Midbody</location>
    </subcellularLocation>
    <text evidence="1">Shuttles between nucleus and cytoplasm during the cell cycle.</text>
</comment>
<gene>
    <name type="primary">ankrd54</name>
    <name type="ORF">zgc:110569</name>
    <name type="ORF">zgc:92735</name>
</gene>
<accession>Q6DGX3</accession>